<feature type="peptide" id="PRO_0000345080" description="Phenol-soluble modulin alpha 4 peptide">
    <location>
        <begin position="1"/>
        <end position="20"/>
    </location>
</feature>
<comment type="function">
    <text evidence="1">Peptide which can recruit, activate and subsequently lyse human neutrophils, thus eliminating the main cellular defense against infection.</text>
</comment>
<comment type="similarity">
    <text evidence="2">Belongs to the phenol-soluble modulin alpha peptides family.</text>
</comment>
<dbReference type="EMBL" id="BA000018">
    <property type="status" value="NOT_ANNOTATED_CDS"/>
    <property type="molecule type" value="Genomic_DNA"/>
</dbReference>
<dbReference type="SMR" id="P0C824"/>
<dbReference type="GO" id="GO:0031640">
    <property type="term" value="P:killing of cells of another organism"/>
    <property type="evidence" value="ECO:0007669"/>
    <property type="project" value="UniProtKB-KW"/>
</dbReference>
<dbReference type="InterPro" id="IPR031429">
    <property type="entry name" value="PSM_alpha"/>
</dbReference>
<dbReference type="Pfam" id="PF17063">
    <property type="entry name" value="PSMalpha"/>
    <property type="match status" value="1"/>
</dbReference>
<sequence>MAIVGTIIKIIKAIIDIFAK</sequence>
<protein>
    <recommendedName>
        <fullName>Phenol-soluble modulin alpha 4 peptide</fullName>
    </recommendedName>
</protein>
<name>PSMA4_STAAN</name>
<reference key="1">
    <citation type="journal article" date="2001" name="Lancet">
        <title>Whole genome sequencing of meticillin-resistant Staphylococcus aureus.</title>
        <authorList>
            <person name="Kuroda M."/>
            <person name="Ohta T."/>
            <person name="Uchiyama I."/>
            <person name="Baba T."/>
            <person name="Yuzawa H."/>
            <person name="Kobayashi I."/>
            <person name="Cui L."/>
            <person name="Oguchi A."/>
            <person name="Aoki K."/>
            <person name="Nagai Y."/>
            <person name="Lian J.-Q."/>
            <person name="Ito T."/>
            <person name="Kanamori M."/>
            <person name="Matsumaru H."/>
            <person name="Maruyama A."/>
            <person name="Murakami H."/>
            <person name="Hosoyama A."/>
            <person name="Mizutani-Ui Y."/>
            <person name="Takahashi N.K."/>
            <person name="Sawano T."/>
            <person name="Inoue R."/>
            <person name="Kaito C."/>
            <person name="Sekimizu K."/>
            <person name="Hirakawa H."/>
            <person name="Kuhara S."/>
            <person name="Goto S."/>
            <person name="Yabuzaki J."/>
            <person name="Kanehisa M."/>
            <person name="Yamashita A."/>
            <person name="Oshima K."/>
            <person name="Furuya K."/>
            <person name="Yoshino C."/>
            <person name="Shiba T."/>
            <person name="Hattori M."/>
            <person name="Ogasawara N."/>
            <person name="Hayashi H."/>
            <person name="Hiramatsu K."/>
        </authorList>
    </citation>
    <scope>NUCLEOTIDE SEQUENCE [LARGE SCALE GENOMIC DNA]</scope>
    <source>
        <strain>N315</strain>
    </source>
</reference>
<proteinExistence type="inferred from homology"/>
<accession>P0C824</accession>
<keyword id="KW-0204">Cytolysis</keyword>
<keyword id="KW-0843">Virulence</keyword>
<evidence type="ECO:0000250" key="1">
    <source>
        <dbReference type="UniProtKB" id="A9JX08"/>
    </source>
</evidence>
<evidence type="ECO:0000305" key="2"/>
<organism>
    <name type="scientific">Staphylococcus aureus (strain N315)</name>
    <dbReference type="NCBI Taxonomy" id="158879"/>
    <lineage>
        <taxon>Bacteria</taxon>
        <taxon>Bacillati</taxon>
        <taxon>Bacillota</taxon>
        <taxon>Bacilli</taxon>
        <taxon>Bacillales</taxon>
        <taxon>Staphylococcaceae</taxon>
        <taxon>Staphylococcus</taxon>
    </lineage>
</organism>
<gene>
    <name type="primary">psmA4</name>
    <name type="ordered locus">SA0410.2</name>
</gene>